<dbReference type="EC" id="2.8.1.10" evidence="1"/>
<dbReference type="EMBL" id="CP000821">
    <property type="protein sequence ID" value="ABV36626.1"/>
    <property type="molecule type" value="Genomic_DNA"/>
</dbReference>
<dbReference type="RefSeq" id="WP_012142361.1">
    <property type="nucleotide sequence ID" value="NC_009831.1"/>
</dbReference>
<dbReference type="SMR" id="A8FUV3"/>
<dbReference type="STRING" id="425104.Ssed_2017"/>
<dbReference type="KEGG" id="sse:Ssed_2017"/>
<dbReference type="eggNOG" id="COG2022">
    <property type="taxonomic scope" value="Bacteria"/>
</dbReference>
<dbReference type="HOGENOM" id="CLU_062233_1_0_6"/>
<dbReference type="OrthoDB" id="9805935at2"/>
<dbReference type="UniPathway" id="UPA00060"/>
<dbReference type="Proteomes" id="UP000002015">
    <property type="component" value="Chromosome"/>
</dbReference>
<dbReference type="GO" id="GO:0005737">
    <property type="term" value="C:cytoplasm"/>
    <property type="evidence" value="ECO:0007669"/>
    <property type="project" value="UniProtKB-SubCell"/>
</dbReference>
<dbReference type="GO" id="GO:1990107">
    <property type="term" value="F:thiazole synthase activity"/>
    <property type="evidence" value="ECO:0007669"/>
    <property type="project" value="UniProtKB-EC"/>
</dbReference>
<dbReference type="GO" id="GO:0009229">
    <property type="term" value="P:thiamine diphosphate biosynthetic process"/>
    <property type="evidence" value="ECO:0007669"/>
    <property type="project" value="UniProtKB-UniRule"/>
</dbReference>
<dbReference type="CDD" id="cd04728">
    <property type="entry name" value="ThiG"/>
    <property type="match status" value="1"/>
</dbReference>
<dbReference type="FunFam" id="3.20.20.70:FF:000049">
    <property type="entry name" value="Thiazole synthase"/>
    <property type="match status" value="1"/>
</dbReference>
<dbReference type="Gene3D" id="3.20.20.70">
    <property type="entry name" value="Aldolase class I"/>
    <property type="match status" value="1"/>
</dbReference>
<dbReference type="HAMAP" id="MF_00443">
    <property type="entry name" value="ThiG"/>
    <property type="match status" value="1"/>
</dbReference>
<dbReference type="InterPro" id="IPR013785">
    <property type="entry name" value="Aldolase_TIM"/>
</dbReference>
<dbReference type="InterPro" id="IPR033983">
    <property type="entry name" value="Thiazole_synthase_ThiG"/>
</dbReference>
<dbReference type="InterPro" id="IPR008867">
    <property type="entry name" value="ThiG"/>
</dbReference>
<dbReference type="PANTHER" id="PTHR34266">
    <property type="entry name" value="THIAZOLE SYNTHASE"/>
    <property type="match status" value="1"/>
</dbReference>
<dbReference type="PANTHER" id="PTHR34266:SF2">
    <property type="entry name" value="THIAZOLE SYNTHASE"/>
    <property type="match status" value="1"/>
</dbReference>
<dbReference type="Pfam" id="PF05690">
    <property type="entry name" value="ThiG"/>
    <property type="match status" value="1"/>
</dbReference>
<dbReference type="SUPFAM" id="SSF110399">
    <property type="entry name" value="ThiG-like"/>
    <property type="match status" value="1"/>
</dbReference>
<gene>
    <name evidence="1" type="primary">thiG</name>
    <name type="ordered locus">Ssed_2017</name>
</gene>
<keyword id="KW-0963">Cytoplasm</keyword>
<keyword id="KW-1185">Reference proteome</keyword>
<keyword id="KW-0704">Schiff base</keyword>
<keyword id="KW-0784">Thiamine biosynthesis</keyword>
<keyword id="KW-0808">Transferase</keyword>
<sequence length="254" mass="27054">MLKIAEHEFNSRLFTGTGKFSSANLMLEAIQASQSQLVTMAMKRLDLSSGSDEILLPLQQSGIKLLPNTSGARNAKEAVFAAELAREVLNTNWVKLEIHPDPKYLMPDPIETLAAAKTLCDKGFVVLPYVHADPVLCRRLEEVGCAAVMPLASPIGSNQGLATETFLKIIIEQASVPVVVDAGIGTPSQATHAMELGADAVLVNTAIASSRDPIAMARCFSQAVETGRAAYRAGLGQVSVRAEHTSPLTGFLNE</sequence>
<protein>
    <recommendedName>
        <fullName evidence="1">Thiazole synthase</fullName>
        <ecNumber evidence="1">2.8.1.10</ecNumber>
    </recommendedName>
</protein>
<feature type="chain" id="PRO_1000080880" description="Thiazole synthase">
    <location>
        <begin position="1"/>
        <end position="254"/>
    </location>
</feature>
<feature type="active site" description="Schiff-base intermediate with DXP" evidence="1">
    <location>
        <position position="95"/>
    </location>
</feature>
<feature type="binding site" evidence="1">
    <location>
        <position position="156"/>
    </location>
    <ligand>
        <name>1-deoxy-D-xylulose 5-phosphate</name>
        <dbReference type="ChEBI" id="CHEBI:57792"/>
    </ligand>
</feature>
<feature type="binding site" evidence="1">
    <location>
        <begin position="182"/>
        <end position="183"/>
    </location>
    <ligand>
        <name>1-deoxy-D-xylulose 5-phosphate</name>
        <dbReference type="ChEBI" id="CHEBI:57792"/>
    </ligand>
</feature>
<feature type="binding site" evidence="1">
    <location>
        <begin position="204"/>
        <end position="205"/>
    </location>
    <ligand>
        <name>1-deoxy-D-xylulose 5-phosphate</name>
        <dbReference type="ChEBI" id="CHEBI:57792"/>
    </ligand>
</feature>
<proteinExistence type="inferred from homology"/>
<comment type="function">
    <text evidence="1">Catalyzes the rearrangement of 1-deoxy-D-xylulose 5-phosphate (DXP) to produce the thiazole phosphate moiety of thiamine. Sulfur is provided by the thiocarboxylate moiety of the carrier protein ThiS. In vitro, sulfur can be provided by H(2)S.</text>
</comment>
<comment type="catalytic activity">
    <reaction evidence="1">
        <text>[ThiS sulfur-carrier protein]-C-terminal-Gly-aminoethanethioate + 2-iminoacetate + 1-deoxy-D-xylulose 5-phosphate = [ThiS sulfur-carrier protein]-C-terminal Gly-Gly + 2-[(2R,5Z)-2-carboxy-4-methylthiazol-5(2H)-ylidene]ethyl phosphate + 2 H2O + H(+)</text>
        <dbReference type="Rhea" id="RHEA:26297"/>
        <dbReference type="Rhea" id="RHEA-COMP:12909"/>
        <dbReference type="Rhea" id="RHEA-COMP:19908"/>
        <dbReference type="ChEBI" id="CHEBI:15377"/>
        <dbReference type="ChEBI" id="CHEBI:15378"/>
        <dbReference type="ChEBI" id="CHEBI:57792"/>
        <dbReference type="ChEBI" id="CHEBI:62899"/>
        <dbReference type="ChEBI" id="CHEBI:77846"/>
        <dbReference type="ChEBI" id="CHEBI:90778"/>
        <dbReference type="ChEBI" id="CHEBI:232372"/>
        <dbReference type="EC" id="2.8.1.10"/>
    </reaction>
</comment>
<comment type="pathway">
    <text evidence="1">Cofactor biosynthesis; thiamine diphosphate biosynthesis.</text>
</comment>
<comment type="subunit">
    <text evidence="1">Homotetramer. Forms heterodimers with either ThiH or ThiS.</text>
</comment>
<comment type="subcellular location">
    <subcellularLocation>
        <location evidence="1">Cytoplasm</location>
    </subcellularLocation>
</comment>
<comment type="similarity">
    <text evidence="1">Belongs to the ThiG family.</text>
</comment>
<evidence type="ECO:0000255" key="1">
    <source>
        <dbReference type="HAMAP-Rule" id="MF_00443"/>
    </source>
</evidence>
<accession>A8FUV3</accession>
<organism>
    <name type="scientific">Shewanella sediminis (strain HAW-EB3)</name>
    <dbReference type="NCBI Taxonomy" id="425104"/>
    <lineage>
        <taxon>Bacteria</taxon>
        <taxon>Pseudomonadati</taxon>
        <taxon>Pseudomonadota</taxon>
        <taxon>Gammaproteobacteria</taxon>
        <taxon>Alteromonadales</taxon>
        <taxon>Shewanellaceae</taxon>
        <taxon>Shewanella</taxon>
    </lineage>
</organism>
<name>THIG_SHESH</name>
<reference key="1">
    <citation type="submission" date="2007-08" db="EMBL/GenBank/DDBJ databases">
        <title>Complete sequence of Shewanella sediminis HAW-EB3.</title>
        <authorList>
            <consortium name="US DOE Joint Genome Institute"/>
            <person name="Copeland A."/>
            <person name="Lucas S."/>
            <person name="Lapidus A."/>
            <person name="Barry K."/>
            <person name="Glavina del Rio T."/>
            <person name="Dalin E."/>
            <person name="Tice H."/>
            <person name="Pitluck S."/>
            <person name="Chertkov O."/>
            <person name="Brettin T."/>
            <person name="Bruce D."/>
            <person name="Detter J.C."/>
            <person name="Han C."/>
            <person name="Schmutz J."/>
            <person name="Larimer F."/>
            <person name="Land M."/>
            <person name="Hauser L."/>
            <person name="Kyrpides N."/>
            <person name="Kim E."/>
            <person name="Zhao J.-S."/>
            <person name="Richardson P."/>
        </authorList>
    </citation>
    <scope>NUCLEOTIDE SEQUENCE [LARGE SCALE GENOMIC DNA]</scope>
    <source>
        <strain>HAW-EB3</strain>
    </source>
</reference>